<comment type="function">
    <text evidence="1">Cell wall formation.</text>
</comment>
<comment type="catalytic activity">
    <reaction evidence="1">
        <text>UDP-N-acetyl-alpha-D-muramate + L-alanine + ATP = UDP-N-acetyl-alpha-D-muramoyl-L-alanine + ADP + phosphate + H(+)</text>
        <dbReference type="Rhea" id="RHEA:23372"/>
        <dbReference type="ChEBI" id="CHEBI:15378"/>
        <dbReference type="ChEBI" id="CHEBI:30616"/>
        <dbReference type="ChEBI" id="CHEBI:43474"/>
        <dbReference type="ChEBI" id="CHEBI:57972"/>
        <dbReference type="ChEBI" id="CHEBI:70757"/>
        <dbReference type="ChEBI" id="CHEBI:83898"/>
        <dbReference type="ChEBI" id="CHEBI:456216"/>
        <dbReference type="EC" id="6.3.2.8"/>
    </reaction>
</comment>
<comment type="pathway">
    <text evidence="1">Cell wall biogenesis; peptidoglycan biosynthesis.</text>
</comment>
<comment type="subcellular location">
    <subcellularLocation>
        <location evidence="1">Cytoplasm</location>
    </subcellularLocation>
</comment>
<comment type="similarity">
    <text evidence="1">Belongs to the MurCDEF family.</text>
</comment>
<keyword id="KW-0067">ATP-binding</keyword>
<keyword id="KW-0131">Cell cycle</keyword>
<keyword id="KW-0132">Cell division</keyword>
<keyword id="KW-0133">Cell shape</keyword>
<keyword id="KW-0961">Cell wall biogenesis/degradation</keyword>
<keyword id="KW-0963">Cytoplasm</keyword>
<keyword id="KW-0436">Ligase</keyword>
<keyword id="KW-0547">Nucleotide-binding</keyword>
<keyword id="KW-0573">Peptidoglycan synthesis</keyword>
<dbReference type="EC" id="6.3.2.8" evidence="1"/>
<dbReference type="EMBL" id="CP000721">
    <property type="protein sequence ID" value="ABR32268.1"/>
    <property type="molecule type" value="Genomic_DNA"/>
</dbReference>
<dbReference type="RefSeq" id="WP_011967443.1">
    <property type="nucleotide sequence ID" value="NC_009617.1"/>
</dbReference>
<dbReference type="SMR" id="A6LPI8"/>
<dbReference type="KEGG" id="cbe:Cbei_0078"/>
<dbReference type="eggNOG" id="COG0773">
    <property type="taxonomic scope" value="Bacteria"/>
</dbReference>
<dbReference type="HOGENOM" id="CLU_028104_1_0_9"/>
<dbReference type="UniPathway" id="UPA00219"/>
<dbReference type="Proteomes" id="UP000000565">
    <property type="component" value="Chromosome"/>
</dbReference>
<dbReference type="GO" id="GO:0005737">
    <property type="term" value="C:cytoplasm"/>
    <property type="evidence" value="ECO:0007669"/>
    <property type="project" value="UniProtKB-SubCell"/>
</dbReference>
<dbReference type="GO" id="GO:0005524">
    <property type="term" value="F:ATP binding"/>
    <property type="evidence" value="ECO:0007669"/>
    <property type="project" value="UniProtKB-UniRule"/>
</dbReference>
<dbReference type="GO" id="GO:0008763">
    <property type="term" value="F:UDP-N-acetylmuramate-L-alanine ligase activity"/>
    <property type="evidence" value="ECO:0007669"/>
    <property type="project" value="UniProtKB-UniRule"/>
</dbReference>
<dbReference type="GO" id="GO:0051301">
    <property type="term" value="P:cell division"/>
    <property type="evidence" value="ECO:0007669"/>
    <property type="project" value="UniProtKB-KW"/>
</dbReference>
<dbReference type="GO" id="GO:0071555">
    <property type="term" value="P:cell wall organization"/>
    <property type="evidence" value="ECO:0007669"/>
    <property type="project" value="UniProtKB-KW"/>
</dbReference>
<dbReference type="GO" id="GO:0009252">
    <property type="term" value="P:peptidoglycan biosynthetic process"/>
    <property type="evidence" value="ECO:0007669"/>
    <property type="project" value="UniProtKB-UniRule"/>
</dbReference>
<dbReference type="GO" id="GO:0008360">
    <property type="term" value="P:regulation of cell shape"/>
    <property type="evidence" value="ECO:0007669"/>
    <property type="project" value="UniProtKB-KW"/>
</dbReference>
<dbReference type="Gene3D" id="3.90.190.20">
    <property type="entry name" value="Mur ligase, C-terminal domain"/>
    <property type="match status" value="1"/>
</dbReference>
<dbReference type="Gene3D" id="3.40.1190.10">
    <property type="entry name" value="Mur-like, catalytic domain"/>
    <property type="match status" value="1"/>
</dbReference>
<dbReference type="Gene3D" id="3.40.50.720">
    <property type="entry name" value="NAD(P)-binding Rossmann-like Domain"/>
    <property type="match status" value="1"/>
</dbReference>
<dbReference type="HAMAP" id="MF_00046">
    <property type="entry name" value="MurC"/>
    <property type="match status" value="1"/>
</dbReference>
<dbReference type="InterPro" id="IPR036565">
    <property type="entry name" value="Mur-like_cat_sf"/>
</dbReference>
<dbReference type="InterPro" id="IPR004101">
    <property type="entry name" value="Mur_ligase_C"/>
</dbReference>
<dbReference type="InterPro" id="IPR036615">
    <property type="entry name" value="Mur_ligase_C_dom_sf"/>
</dbReference>
<dbReference type="InterPro" id="IPR013221">
    <property type="entry name" value="Mur_ligase_cen"/>
</dbReference>
<dbReference type="InterPro" id="IPR000713">
    <property type="entry name" value="Mur_ligase_N"/>
</dbReference>
<dbReference type="InterPro" id="IPR050061">
    <property type="entry name" value="MurCDEF_pg_biosynth"/>
</dbReference>
<dbReference type="InterPro" id="IPR005758">
    <property type="entry name" value="UDP-N-AcMur_Ala_ligase_MurC"/>
</dbReference>
<dbReference type="NCBIfam" id="TIGR01082">
    <property type="entry name" value="murC"/>
    <property type="match status" value="1"/>
</dbReference>
<dbReference type="PANTHER" id="PTHR43445:SF3">
    <property type="entry name" value="UDP-N-ACETYLMURAMATE--L-ALANINE LIGASE"/>
    <property type="match status" value="1"/>
</dbReference>
<dbReference type="PANTHER" id="PTHR43445">
    <property type="entry name" value="UDP-N-ACETYLMURAMATE--L-ALANINE LIGASE-RELATED"/>
    <property type="match status" value="1"/>
</dbReference>
<dbReference type="Pfam" id="PF01225">
    <property type="entry name" value="Mur_ligase"/>
    <property type="match status" value="1"/>
</dbReference>
<dbReference type="Pfam" id="PF02875">
    <property type="entry name" value="Mur_ligase_C"/>
    <property type="match status" value="1"/>
</dbReference>
<dbReference type="Pfam" id="PF08245">
    <property type="entry name" value="Mur_ligase_M"/>
    <property type="match status" value="1"/>
</dbReference>
<dbReference type="SUPFAM" id="SSF51984">
    <property type="entry name" value="MurCD N-terminal domain"/>
    <property type="match status" value="1"/>
</dbReference>
<dbReference type="SUPFAM" id="SSF53623">
    <property type="entry name" value="MurD-like peptide ligases, catalytic domain"/>
    <property type="match status" value="1"/>
</dbReference>
<dbReference type="SUPFAM" id="SSF53244">
    <property type="entry name" value="MurD-like peptide ligases, peptide-binding domain"/>
    <property type="match status" value="1"/>
</dbReference>
<evidence type="ECO:0000255" key="1">
    <source>
        <dbReference type="HAMAP-Rule" id="MF_00046"/>
    </source>
</evidence>
<gene>
    <name evidence="1" type="primary">murC</name>
    <name type="ordered locus">Cbei_0078</name>
</gene>
<accession>A6LPI8</accession>
<reference key="1">
    <citation type="submission" date="2007-06" db="EMBL/GenBank/DDBJ databases">
        <title>Complete sequence of Clostridium beijerinckii NCIMB 8052.</title>
        <authorList>
            <consortium name="US DOE Joint Genome Institute"/>
            <person name="Copeland A."/>
            <person name="Lucas S."/>
            <person name="Lapidus A."/>
            <person name="Barry K."/>
            <person name="Detter J.C."/>
            <person name="Glavina del Rio T."/>
            <person name="Hammon N."/>
            <person name="Israni S."/>
            <person name="Dalin E."/>
            <person name="Tice H."/>
            <person name="Pitluck S."/>
            <person name="Sims D."/>
            <person name="Brettin T."/>
            <person name="Bruce D."/>
            <person name="Tapia R."/>
            <person name="Brainard J."/>
            <person name="Schmutz J."/>
            <person name="Larimer F."/>
            <person name="Land M."/>
            <person name="Hauser L."/>
            <person name="Kyrpides N."/>
            <person name="Mikhailova N."/>
            <person name="Bennet G."/>
            <person name="Cann I."/>
            <person name="Chen J.-S."/>
            <person name="Contreras A.L."/>
            <person name="Jones D."/>
            <person name="Kashket E."/>
            <person name="Mitchell W."/>
            <person name="Stoddard S."/>
            <person name="Schwarz W."/>
            <person name="Qureshi N."/>
            <person name="Young M."/>
            <person name="Shi Z."/>
            <person name="Ezeji T."/>
            <person name="White B."/>
            <person name="Blaschek H."/>
            <person name="Richardson P."/>
        </authorList>
    </citation>
    <scope>NUCLEOTIDE SEQUENCE [LARGE SCALE GENOMIC DNA]</scope>
    <source>
        <strain>ATCC 51743 / NCIMB 8052</strain>
    </source>
</reference>
<sequence>MSFNFIKDKDKKIHFIGIGGISMSGLAAVLLNSGYSVSGSDFKDSAIIDKLRSSGAEIYIGHRRENINNVDLVVYTAAIPSDNPELLEAKEKNIALMDRAEFLGQIMKGHKYSVAISGTHGKTTCTSMLSHITLADNLDPTILVGGELDAIGGNFRIGNSEYFLTEACEYKRSFLKFPPYVGIILNIDSDHLDYYKDIDEIADTFLQFSRLIPEDGYLVGYADDQRVNEILSETNCNTLSYGFSDNANLTAKNIHFNTNGCATFDVYKDGNNLFNITLNVPGKHNILNALASICVSLIFNISNDCIIEGLSNCKGAHKRFEYKGKLNGVTVIDDYAHHPTEIKATLSTAKQMNHNKTYCIFQPHTYTRTKALFDEFTECFNDADELILMDIYAAREKNTGLVSSDELGDALRNKGLKCINVHSHDEALNYVKSKLVSGDLLLTVGAGDVVIVGEKYLKA</sequence>
<feature type="chain" id="PRO_1000074733" description="UDP-N-acetylmuramate--L-alanine ligase">
    <location>
        <begin position="1"/>
        <end position="459"/>
    </location>
</feature>
<feature type="binding site" evidence="1">
    <location>
        <begin position="118"/>
        <end position="124"/>
    </location>
    <ligand>
        <name>ATP</name>
        <dbReference type="ChEBI" id="CHEBI:30616"/>
    </ligand>
</feature>
<name>MURC_CLOB8</name>
<organism>
    <name type="scientific">Clostridium beijerinckii (strain ATCC 51743 / NCIMB 8052)</name>
    <name type="common">Clostridium acetobutylicum</name>
    <dbReference type="NCBI Taxonomy" id="290402"/>
    <lineage>
        <taxon>Bacteria</taxon>
        <taxon>Bacillati</taxon>
        <taxon>Bacillota</taxon>
        <taxon>Clostridia</taxon>
        <taxon>Eubacteriales</taxon>
        <taxon>Clostridiaceae</taxon>
        <taxon>Clostridium</taxon>
    </lineage>
</organism>
<protein>
    <recommendedName>
        <fullName evidence="1">UDP-N-acetylmuramate--L-alanine ligase</fullName>
        <ecNumber evidence="1">6.3.2.8</ecNumber>
    </recommendedName>
    <alternativeName>
        <fullName evidence="1">UDP-N-acetylmuramoyl-L-alanine synthetase</fullName>
    </alternativeName>
</protein>
<proteinExistence type="inferred from homology"/>